<proteinExistence type="evidence at protein level"/>
<evidence type="ECO:0000250" key="1">
    <source>
        <dbReference type="UniProtKB" id="P30138"/>
    </source>
</evidence>
<evidence type="ECO:0000269" key="2">
    <source>
    </source>
</evidence>
<evidence type="ECO:0000269" key="3">
    <source>
    </source>
</evidence>
<evidence type="ECO:0000303" key="4">
    <source>
    </source>
</evidence>
<evidence type="ECO:0000303" key="5">
    <source>
    </source>
</evidence>
<evidence type="ECO:0000305" key="6"/>
<evidence type="ECO:0000305" key="7">
    <source>
    </source>
</evidence>
<evidence type="ECO:0000305" key="8">
    <source>
    </source>
</evidence>
<evidence type="ECO:0000312" key="9">
    <source>
        <dbReference type="EMBL" id="AAS81321.1"/>
    </source>
</evidence>
<sequence length="271" mass="29628">MRWTKEELDRYHRQMILPQVGPEGQERLKRASVVVVGAGGLGVPVLQYLVAAGVGRVGVVEMDRVEVSNLHRQVLYTTEDVGEPKALVAQKRLQALNPLVRVEAYPVRLTSENALEILRPYDLVVDASDNFPTRYLVNDAAVLLGKPLVFGAIYQFDGQVAVFHHPTLHGEMGPCYRCLFPKPPPPGAVPSCAEAGVFGVLPAVVGSLMAAEALKVLLGIGKPLAGHLLLYDALEASFRKLTVRRNPRCPVCGDEPTQRELVDYEAFCGLR</sequence>
<reference key="1">
    <citation type="journal article" date="2004" name="Nat. Biotechnol.">
        <title>The genome sequence of the extreme thermophile Thermus thermophilus.</title>
        <authorList>
            <person name="Henne A."/>
            <person name="Brueggemann H."/>
            <person name="Raasch C."/>
            <person name="Wiezer A."/>
            <person name="Hartsch T."/>
            <person name="Liesegang H."/>
            <person name="Johann A."/>
            <person name="Lienard T."/>
            <person name="Gohl O."/>
            <person name="Martinez-Arias R."/>
            <person name="Jacobi C."/>
            <person name="Starkuviene V."/>
            <person name="Schlenczeck S."/>
            <person name="Dencker S."/>
            <person name="Huber R."/>
            <person name="Klenk H.-P."/>
            <person name="Kramer W."/>
            <person name="Merkl R."/>
            <person name="Gottschalk G."/>
            <person name="Fritz H.-J."/>
        </authorList>
    </citation>
    <scope>NUCLEOTIDE SEQUENCE [LARGE SCALE GENOMIC DNA]</scope>
    <source>
        <strain>ATCC BAA-163 / DSM 7039 / HB27</strain>
    </source>
</reference>
<reference key="2">
    <citation type="journal article" date="2008" name="EMBO J.">
        <title>Common thiolation mechanism in the biosynthesis of tRNA thiouridine and sulphur-containing cofactors.</title>
        <authorList>
            <person name="Shigi N."/>
            <person name="Sakaguchi Y."/>
            <person name="Asai S."/>
            <person name="Suzuki T."/>
            <person name="Watanabe K."/>
        </authorList>
    </citation>
    <scope>FUNCTION</scope>
    <scope>CATALYTIC ACTIVITY</scope>
    <scope>PATHWAY</scope>
    <scope>DISRUPTION PHENOTYPE</scope>
    <scope>CROSS-LINKING TO SULFUR CARRIER PROTEIN TTUB</scope>
    <scope>MUTAGENESIS OF CYS-192 AND CYS-268</scope>
    <source>
        <strain>ATCC BAA-163 / DSM 7039 / HB27</strain>
    </source>
</reference>
<reference key="3">
    <citation type="journal article" date="2012" name="J. Biol. Chem.">
        <title>Posttranslational modification of cellular proteins by a ubiquitin-like protein in bacteria.</title>
        <authorList>
            <person name="Shigi N."/>
        </authorList>
    </citation>
    <scope>FUNCTION</scope>
    <scope>DISRUPTION PHENOTYPE</scope>
    <scope>CONJUGATION TO TTUB</scope>
    <scope>ACTIVITY REGULATION</scope>
    <source>
        <strain>ATCC BAA-163 / DSM 7039 / HB27</strain>
    </source>
</reference>
<name>TTUC_THET2</name>
<accession>Q72J02</accession>
<comment type="function">
    <text evidence="2 3">Adenylyltransferase involved in the biosynthesis of several sulfur compounds. Is required for the 2-thiolation of 5-methyluridine residue at position 54 in the T loop of tRNAs, leading to 5-methyl-2-thiouridine (m(5)s(2)U or s(2)T). This modification allows thermal stabilization of tRNAs in thermophilic microorganisms, and is essential for cell growth at high temperatures. TtuC catalyzes the adenylation by ATP of the carboxyl group of the C-terminal glycine of sulfur carrier protein TtuB. Is also involved in the biosynthesis of thiamine, molybdenum cofactor (Moco) and probably tungsten cofactor (Wco), by adenylating the sulfur carriers ThiS and MoaD (PubMed:19037260). Is required for the conjugation of TtuB to target proteins (PubMed:22467871).</text>
</comment>
<comment type="catalytic activity">
    <reaction evidence="2">
        <text>[molybdopterin-synthase sulfur-carrier protein]-C-terminal Gly-Gly + ATP + H(+) = [molybdopterin-synthase sulfur-carrier protein]-C-terminal Gly-Gly-AMP + diphosphate</text>
        <dbReference type="Rhea" id="RHEA:43616"/>
        <dbReference type="Rhea" id="RHEA-COMP:12159"/>
        <dbReference type="Rhea" id="RHEA-COMP:12202"/>
        <dbReference type="ChEBI" id="CHEBI:15378"/>
        <dbReference type="ChEBI" id="CHEBI:30616"/>
        <dbReference type="ChEBI" id="CHEBI:33019"/>
        <dbReference type="ChEBI" id="CHEBI:90618"/>
        <dbReference type="ChEBI" id="CHEBI:90778"/>
        <dbReference type="EC" id="2.7.7.80"/>
    </reaction>
</comment>
<comment type="catalytic activity">
    <reaction evidence="2">
        <text>[ThiS sulfur-carrier protein]-C-terminal Gly-Gly + ATP + H(+) = [ThiS sulfur-carrier protein]-C-terminal Gly-Gly-AMP + diphosphate</text>
        <dbReference type="Rhea" id="RHEA:43344"/>
        <dbReference type="Rhea" id="RHEA-COMP:12909"/>
        <dbReference type="Rhea" id="RHEA-COMP:12910"/>
        <dbReference type="ChEBI" id="CHEBI:15378"/>
        <dbReference type="ChEBI" id="CHEBI:30616"/>
        <dbReference type="ChEBI" id="CHEBI:33019"/>
        <dbReference type="ChEBI" id="CHEBI:90618"/>
        <dbReference type="ChEBI" id="CHEBI:90778"/>
        <dbReference type="EC" id="2.7.7.73"/>
    </reaction>
</comment>
<comment type="catalytic activity">
    <reaction evidence="2">
        <text>[TtuB sulfur-carrier protein]-C-terminal Gly-Gly + ATP + H(+) = [TtuB sulfur-carrier protein]-C-terminal Gly-Gly-AMP + diphosphate</text>
        <dbReference type="Rhea" id="RHEA:55168"/>
        <dbReference type="Rhea" id="RHEA-COMP:13342"/>
        <dbReference type="Rhea" id="RHEA-COMP:14113"/>
        <dbReference type="ChEBI" id="CHEBI:15378"/>
        <dbReference type="ChEBI" id="CHEBI:30616"/>
        <dbReference type="ChEBI" id="CHEBI:33019"/>
        <dbReference type="ChEBI" id="CHEBI:90618"/>
        <dbReference type="ChEBI" id="CHEBI:90778"/>
    </reaction>
</comment>
<comment type="cofactor">
    <cofactor evidence="1">
        <name>Zn(2+)</name>
        <dbReference type="ChEBI" id="CHEBI:29105"/>
    </cofactor>
    <text evidence="1">Binds 1 zinc ion per subunit.</text>
</comment>
<comment type="activity regulation">
    <text evidence="8">Enzymatic activity may be regulated by TtuB conjugation.</text>
</comment>
<comment type="pathway">
    <text evidence="2">tRNA modification.</text>
</comment>
<comment type="pathway">
    <text evidence="2">Cofactor biosynthesis; thiamine diphosphate biosynthesis.</text>
</comment>
<comment type="pathway">
    <text evidence="2">Cofactor biosynthesis; molybdopterin biosynthesis.</text>
</comment>
<comment type="PTM">
    <text evidence="2 3">Conjugated to TtuB via a covalent linkage that likely involves a lysine residue (PubMed:22467871). Is able to form a covalent thioester adduct with TtuB via Cys-192 in vitro (PubMed:19037260).</text>
</comment>
<comment type="disruption phenotype">
    <text evidence="2 3">Disruption of this gene completely abolishes the presence of m(5)s(2)U in tRNAs, although its precursor, 5-methyluridine (ribothymidine) is present; other nucleoside modifications remain unchanged (PubMed:19037260). These deletion mutants exhibit a temperature-sensitive phenotype similar to the ttuA and ttuB deletion mutants, they are unable to grow above 80 degrees Celsius (PubMed:19037260). They are also unable to synthesize thiamine and molybdenum cofactor (PubMed:19037260). No TtuB-protein conjugate is formed and only free TtuB is detected in the ttuC deletion strain (PubMed:22467871).</text>
</comment>
<comment type="similarity">
    <text evidence="6">Belongs to the HesA/MoeB/ThiF family.</text>
</comment>
<feature type="chain" id="PRO_0000442737" description="Sulfur carrier protein adenylyltransferase">
    <location>
        <begin position="1"/>
        <end position="271"/>
    </location>
</feature>
<feature type="binding site" evidence="1">
    <location>
        <position position="13"/>
    </location>
    <ligand>
        <name>ATP</name>
        <dbReference type="ChEBI" id="CHEBI:30616"/>
    </ligand>
</feature>
<feature type="binding site" evidence="1">
    <location>
        <position position="40"/>
    </location>
    <ligand>
        <name>ATP</name>
        <dbReference type="ChEBI" id="CHEBI:30616"/>
    </ligand>
</feature>
<feature type="binding site" evidence="1">
    <location>
        <position position="61"/>
    </location>
    <ligand>
        <name>ATP</name>
        <dbReference type="ChEBI" id="CHEBI:30616"/>
    </ligand>
</feature>
<feature type="binding site" evidence="1">
    <location>
        <position position="72"/>
    </location>
    <ligand>
        <name>ATP</name>
        <dbReference type="ChEBI" id="CHEBI:30616"/>
    </ligand>
</feature>
<feature type="binding site" evidence="1">
    <location>
        <position position="85"/>
    </location>
    <ligand>
        <name>ATP</name>
        <dbReference type="ChEBI" id="CHEBI:30616"/>
    </ligand>
</feature>
<feature type="binding site" evidence="1">
    <location>
        <position position="109"/>
    </location>
    <ligand>
        <name>ATP</name>
        <dbReference type="ChEBI" id="CHEBI:30616"/>
    </ligand>
</feature>
<feature type="binding site" evidence="1">
    <location>
        <begin position="129"/>
        <end position="133"/>
    </location>
    <ligand>
        <name>ATP</name>
        <dbReference type="ChEBI" id="CHEBI:30616"/>
    </ligand>
</feature>
<feature type="binding site" evidence="1">
    <location>
        <position position="175"/>
    </location>
    <ligand>
        <name>Zn(2+)</name>
        <dbReference type="ChEBI" id="CHEBI:29105"/>
    </ligand>
</feature>
<feature type="binding site" evidence="1">
    <location>
        <position position="178"/>
    </location>
    <ligand>
        <name>Zn(2+)</name>
        <dbReference type="ChEBI" id="CHEBI:29105"/>
    </ligand>
</feature>
<feature type="binding site" evidence="1">
    <location>
        <position position="249"/>
    </location>
    <ligand>
        <name>Zn(2+)</name>
        <dbReference type="ChEBI" id="CHEBI:29105"/>
    </ligand>
</feature>
<feature type="binding site" evidence="1">
    <location>
        <position position="252"/>
    </location>
    <ligand>
        <name>Zn(2+)</name>
        <dbReference type="ChEBI" id="CHEBI:29105"/>
    </ligand>
</feature>
<feature type="cross-link" description="Glycyl cysteine thioester (Cys-Gly) (interchain with G-Cter in TtuB)" evidence="2">
    <location>
        <position position="192"/>
    </location>
</feature>
<feature type="mutagenesis site" description="Not able to form a thioester complex with TtuB." evidence="2">
    <original>C</original>
    <variation>S</variation>
    <location>
        <position position="192"/>
    </location>
</feature>
<feature type="mutagenesis site" description="Still able to form a thioester complex with TtuB." evidence="2">
    <original>C</original>
    <variation>S</variation>
    <location>
        <position position="268"/>
    </location>
</feature>
<gene>
    <name evidence="4" type="primary">ttuC</name>
    <name evidence="9" type="synonym">moeB</name>
    <name evidence="9" type="ordered locus">TT_C0979</name>
</gene>
<dbReference type="EC" id="2.7.7.80" evidence="2"/>
<dbReference type="EC" id="2.7.7.73" evidence="2"/>
<dbReference type="EC" id="2.7.7.-" evidence="2"/>
<dbReference type="EMBL" id="AE017221">
    <property type="protein sequence ID" value="AAS81321.1"/>
    <property type="molecule type" value="Genomic_DNA"/>
</dbReference>
<dbReference type="RefSeq" id="WP_011173400.1">
    <property type="nucleotide sequence ID" value="NC_005835.1"/>
</dbReference>
<dbReference type="SMR" id="Q72J02"/>
<dbReference type="KEGG" id="tth:TT_C0979"/>
<dbReference type="eggNOG" id="COG0476">
    <property type="taxonomic scope" value="Bacteria"/>
</dbReference>
<dbReference type="HOGENOM" id="CLU_013325_10_0_0"/>
<dbReference type="OrthoDB" id="9804286at2"/>
<dbReference type="UniPathway" id="UPA00060"/>
<dbReference type="UniPathway" id="UPA00344"/>
<dbReference type="Proteomes" id="UP000000592">
    <property type="component" value="Chromosome"/>
</dbReference>
<dbReference type="GO" id="GO:0005829">
    <property type="term" value="C:cytosol"/>
    <property type="evidence" value="ECO:0007669"/>
    <property type="project" value="TreeGrafter"/>
</dbReference>
<dbReference type="GO" id="GO:0005524">
    <property type="term" value="F:ATP binding"/>
    <property type="evidence" value="ECO:0007669"/>
    <property type="project" value="UniProtKB-KW"/>
</dbReference>
<dbReference type="GO" id="GO:0046872">
    <property type="term" value="F:metal ion binding"/>
    <property type="evidence" value="ECO:0007669"/>
    <property type="project" value="UniProtKB-KW"/>
</dbReference>
<dbReference type="GO" id="GO:0061605">
    <property type="term" value="F:molybdopterin-synthase adenylyltransferase activity"/>
    <property type="evidence" value="ECO:0007669"/>
    <property type="project" value="UniProtKB-EC"/>
</dbReference>
<dbReference type="GO" id="GO:0008146">
    <property type="term" value="F:sulfotransferase activity"/>
    <property type="evidence" value="ECO:0007669"/>
    <property type="project" value="TreeGrafter"/>
</dbReference>
<dbReference type="GO" id="GO:0004792">
    <property type="term" value="F:thiosulfate-cyanide sulfurtransferase activity"/>
    <property type="evidence" value="ECO:0007669"/>
    <property type="project" value="TreeGrafter"/>
</dbReference>
<dbReference type="GO" id="GO:0008641">
    <property type="term" value="F:ubiquitin-like modifier activating enzyme activity"/>
    <property type="evidence" value="ECO:0007669"/>
    <property type="project" value="InterPro"/>
</dbReference>
<dbReference type="GO" id="GO:0006777">
    <property type="term" value="P:Mo-molybdopterin cofactor biosynthetic process"/>
    <property type="evidence" value="ECO:0007669"/>
    <property type="project" value="UniProtKB-KW"/>
</dbReference>
<dbReference type="GO" id="GO:0009228">
    <property type="term" value="P:thiamine biosynthetic process"/>
    <property type="evidence" value="ECO:0007669"/>
    <property type="project" value="UniProtKB-KW"/>
</dbReference>
<dbReference type="GO" id="GO:0009229">
    <property type="term" value="P:thiamine diphosphate biosynthetic process"/>
    <property type="evidence" value="ECO:0007669"/>
    <property type="project" value="UniProtKB-UniPathway"/>
</dbReference>
<dbReference type="GO" id="GO:0008033">
    <property type="term" value="P:tRNA processing"/>
    <property type="evidence" value="ECO:0007669"/>
    <property type="project" value="UniProtKB-KW"/>
</dbReference>
<dbReference type="CDD" id="cd00757">
    <property type="entry name" value="ThiF_MoeB_HesA_family"/>
    <property type="match status" value="1"/>
</dbReference>
<dbReference type="FunFam" id="3.40.50.720:FF:000033">
    <property type="entry name" value="Adenylyltransferase and sulfurtransferase MOCS3"/>
    <property type="match status" value="1"/>
</dbReference>
<dbReference type="Gene3D" id="3.40.50.720">
    <property type="entry name" value="NAD(P)-binding Rossmann-like Domain"/>
    <property type="match status" value="1"/>
</dbReference>
<dbReference type="InterPro" id="IPR045886">
    <property type="entry name" value="ThiF/MoeB/HesA"/>
</dbReference>
<dbReference type="InterPro" id="IPR000594">
    <property type="entry name" value="ThiF_NAD_FAD-bd"/>
</dbReference>
<dbReference type="InterPro" id="IPR035985">
    <property type="entry name" value="Ubiquitin-activating_enz"/>
</dbReference>
<dbReference type="NCBIfam" id="NF004281">
    <property type="entry name" value="PRK05690.1"/>
    <property type="match status" value="1"/>
</dbReference>
<dbReference type="PANTHER" id="PTHR10953:SF102">
    <property type="entry name" value="ADENYLYLTRANSFERASE AND SULFURTRANSFERASE MOCS3"/>
    <property type="match status" value="1"/>
</dbReference>
<dbReference type="PANTHER" id="PTHR10953">
    <property type="entry name" value="UBIQUITIN-ACTIVATING ENZYME E1"/>
    <property type="match status" value="1"/>
</dbReference>
<dbReference type="Pfam" id="PF00899">
    <property type="entry name" value="ThiF"/>
    <property type="match status" value="1"/>
</dbReference>
<dbReference type="SUPFAM" id="SSF69572">
    <property type="entry name" value="Activating enzymes of the ubiquitin-like proteins"/>
    <property type="match status" value="1"/>
</dbReference>
<protein>
    <recommendedName>
        <fullName evidence="7">Sulfur carrier protein adenylyltransferase</fullName>
    </recommendedName>
    <alternativeName>
        <fullName evidence="5">E1-like protein TtuC</fullName>
    </alternativeName>
    <alternativeName>
        <fullName evidence="7">Sulfur carrier protein MoaD adenylyltransferase</fullName>
        <ecNumber evidence="2">2.7.7.80</ecNumber>
    </alternativeName>
    <alternativeName>
        <fullName evidence="7">Sulfur carrier protein ThiS adenylyltransferase</fullName>
        <ecNumber evidence="2">2.7.7.73</ecNumber>
    </alternativeName>
    <alternativeName>
        <fullName evidence="7">Sulfur carrier protein TtuB adenylyltransferase</fullName>
        <ecNumber evidence="2">2.7.7.-</ecNumber>
    </alternativeName>
    <alternativeName>
        <fullName evidence="4">tRNA two-thiouridine-synthesizing protein C</fullName>
    </alternativeName>
</protein>
<keyword id="KW-0067">ATP-binding</keyword>
<keyword id="KW-1017">Isopeptide bond</keyword>
<keyword id="KW-0479">Metal-binding</keyword>
<keyword id="KW-0501">Molybdenum cofactor biosynthesis</keyword>
<keyword id="KW-0547">Nucleotide-binding</keyword>
<keyword id="KW-0548">Nucleotidyltransferase</keyword>
<keyword id="KW-0784">Thiamine biosynthesis</keyword>
<keyword id="KW-0882">Thioester bond</keyword>
<keyword id="KW-0808">Transferase</keyword>
<keyword id="KW-0819">tRNA processing</keyword>
<keyword id="KW-0832">Ubl conjugation</keyword>
<keyword id="KW-0862">Zinc</keyword>
<organism>
    <name type="scientific">Thermus thermophilus (strain ATCC BAA-163 / DSM 7039 / HB27)</name>
    <dbReference type="NCBI Taxonomy" id="262724"/>
    <lineage>
        <taxon>Bacteria</taxon>
        <taxon>Thermotogati</taxon>
        <taxon>Deinococcota</taxon>
        <taxon>Deinococci</taxon>
        <taxon>Thermales</taxon>
        <taxon>Thermaceae</taxon>
        <taxon>Thermus</taxon>
    </lineage>
</organism>